<evidence type="ECO:0000255" key="1">
    <source>
        <dbReference type="HAMAP-Rule" id="MF_00518"/>
    </source>
</evidence>
<sequence>MRVVIQRVTEASVSIRGALHSRIGQGVLILVGIEDRDGESDIELLTSKISNLRIFDDSEGVMNLSVKDINGEALVVSQFTLMGSTRKGNRPSYIKASRPEIAIPLYESFCNSLSAKLGKAVRQGVFGADMQVALVNDGPVTILIDTHNKE</sequence>
<protein>
    <recommendedName>
        <fullName evidence="1">D-aminoacyl-tRNA deacylase</fullName>
        <shortName evidence="1">DTD</shortName>
        <ecNumber evidence="1">3.1.1.96</ecNumber>
    </recommendedName>
    <alternativeName>
        <fullName evidence="1">Gly-tRNA(Ala) deacylase</fullName>
    </alternativeName>
</protein>
<gene>
    <name evidence="1" type="primary">dtd</name>
    <name type="ordered locus">PGN_1939</name>
</gene>
<accession>B2RM63</accession>
<dbReference type="EC" id="3.1.1.96" evidence="1"/>
<dbReference type="EMBL" id="AP009380">
    <property type="protein sequence ID" value="BAG34458.1"/>
    <property type="molecule type" value="Genomic_DNA"/>
</dbReference>
<dbReference type="RefSeq" id="WP_004583644.1">
    <property type="nucleotide sequence ID" value="NZ_CP025930.1"/>
</dbReference>
<dbReference type="SMR" id="B2RM63"/>
<dbReference type="GeneID" id="29257082"/>
<dbReference type="KEGG" id="pgn:PGN_1939"/>
<dbReference type="eggNOG" id="COG1490">
    <property type="taxonomic scope" value="Bacteria"/>
</dbReference>
<dbReference type="HOGENOM" id="CLU_076901_1_0_10"/>
<dbReference type="OrthoDB" id="9801395at2"/>
<dbReference type="BioCyc" id="PGIN431947:G1G2V-2174-MONOMER"/>
<dbReference type="Proteomes" id="UP000008842">
    <property type="component" value="Chromosome"/>
</dbReference>
<dbReference type="GO" id="GO:0005737">
    <property type="term" value="C:cytoplasm"/>
    <property type="evidence" value="ECO:0007669"/>
    <property type="project" value="UniProtKB-SubCell"/>
</dbReference>
<dbReference type="GO" id="GO:0051500">
    <property type="term" value="F:D-tyrosyl-tRNA(Tyr) deacylase activity"/>
    <property type="evidence" value="ECO:0007669"/>
    <property type="project" value="TreeGrafter"/>
</dbReference>
<dbReference type="GO" id="GO:0106026">
    <property type="term" value="F:Gly-tRNA(Ala) deacylase activity"/>
    <property type="evidence" value="ECO:0007669"/>
    <property type="project" value="UniProtKB-UniRule"/>
</dbReference>
<dbReference type="GO" id="GO:0043908">
    <property type="term" value="F:Ser(Gly)-tRNA(Ala) hydrolase activity"/>
    <property type="evidence" value="ECO:0007669"/>
    <property type="project" value="UniProtKB-UniRule"/>
</dbReference>
<dbReference type="GO" id="GO:0000049">
    <property type="term" value="F:tRNA binding"/>
    <property type="evidence" value="ECO:0007669"/>
    <property type="project" value="UniProtKB-UniRule"/>
</dbReference>
<dbReference type="GO" id="GO:0019478">
    <property type="term" value="P:D-amino acid catabolic process"/>
    <property type="evidence" value="ECO:0007669"/>
    <property type="project" value="UniProtKB-UniRule"/>
</dbReference>
<dbReference type="FunFam" id="3.50.80.10:FF:000001">
    <property type="entry name" value="D-aminoacyl-tRNA deacylase"/>
    <property type="match status" value="1"/>
</dbReference>
<dbReference type="Gene3D" id="3.50.80.10">
    <property type="entry name" value="D-tyrosyl-tRNA(Tyr) deacylase"/>
    <property type="match status" value="1"/>
</dbReference>
<dbReference type="HAMAP" id="MF_00518">
    <property type="entry name" value="Deacylase_Dtd"/>
    <property type="match status" value="1"/>
</dbReference>
<dbReference type="InterPro" id="IPR003732">
    <property type="entry name" value="Daa-tRNA_deacyls_DTD"/>
</dbReference>
<dbReference type="InterPro" id="IPR023509">
    <property type="entry name" value="DTD-like_sf"/>
</dbReference>
<dbReference type="NCBIfam" id="TIGR00256">
    <property type="entry name" value="D-aminoacyl-tRNA deacylase"/>
    <property type="match status" value="1"/>
</dbReference>
<dbReference type="PANTHER" id="PTHR10472:SF5">
    <property type="entry name" value="D-AMINOACYL-TRNA DEACYLASE 1"/>
    <property type="match status" value="1"/>
</dbReference>
<dbReference type="PANTHER" id="PTHR10472">
    <property type="entry name" value="D-TYROSYL-TRNA TYR DEACYLASE"/>
    <property type="match status" value="1"/>
</dbReference>
<dbReference type="Pfam" id="PF02580">
    <property type="entry name" value="Tyr_Deacylase"/>
    <property type="match status" value="1"/>
</dbReference>
<dbReference type="SUPFAM" id="SSF69500">
    <property type="entry name" value="DTD-like"/>
    <property type="match status" value="1"/>
</dbReference>
<feature type="chain" id="PRO_1000127557" description="D-aminoacyl-tRNA deacylase">
    <location>
        <begin position="1"/>
        <end position="150"/>
    </location>
</feature>
<feature type="short sequence motif" description="Gly-cisPro motif, important for rejection of L-amino acids" evidence="1">
    <location>
        <begin position="138"/>
        <end position="139"/>
    </location>
</feature>
<organism>
    <name type="scientific">Porphyromonas gingivalis (strain ATCC 33277 / DSM 20709 / CIP 103683 / JCM 12257 / NCTC 11834 / 2561)</name>
    <dbReference type="NCBI Taxonomy" id="431947"/>
    <lineage>
        <taxon>Bacteria</taxon>
        <taxon>Pseudomonadati</taxon>
        <taxon>Bacteroidota</taxon>
        <taxon>Bacteroidia</taxon>
        <taxon>Bacteroidales</taxon>
        <taxon>Porphyromonadaceae</taxon>
        <taxon>Porphyromonas</taxon>
    </lineage>
</organism>
<keyword id="KW-0963">Cytoplasm</keyword>
<keyword id="KW-0378">Hydrolase</keyword>
<keyword id="KW-0694">RNA-binding</keyword>
<keyword id="KW-0820">tRNA-binding</keyword>
<comment type="function">
    <text evidence="1">An aminoacyl-tRNA editing enzyme that deacylates mischarged D-aminoacyl-tRNAs. Also deacylates mischarged glycyl-tRNA(Ala), protecting cells against glycine mischarging by AlaRS. Acts via tRNA-based rather than protein-based catalysis; rejects L-amino acids rather than detecting D-amino acids in the active site. By recycling D-aminoacyl-tRNA to D-amino acids and free tRNA molecules, this enzyme counteracts the toxicity associated with the formation of D-aminoacyl-tRNA entities in vivo and helps enforce protein L-homochirality.</text>
</comment>
<comment type="catalytic activity">
    <reaction evidence="1">
        <text>glycyl-tRNA(Ala) + H2O = tRNA(Ala) + glycine + H(+)</text>
        <dbReference type="Rhea" id="RHEA:53744"/>
        <dbReference type="Rhea" id="RHEA-COMP:9657"/>
        <dbReference type="Rhea" id="RHEA-COMP:13640"/>
        <dbReference type="ChEBI" id="CHEBI:15377"/>
        <dbReference type="ChEBI" id="CHEBI:15378"/>
        <dbReference type="ChEBI" id="CHEBI:57305"/>
        <dbReference type="ChEBI" id="CHEBI:78442"/>
        <dbReference type="ChEBI" id="CHEBI:78522"/>
        <dbReference type="EC" id="3.1.1.96"/>
    </reaction>
</comment>
<comment type="catalytic activity">
    <reaction evidence="1">
        <text>a D-aminoacyl-tRNA + H2O = a tRNA + a D-alpha-amino acid + H(+)</text>
        <dbReference type="Rhea" id="RHEA:13953"/>
        <dbReference type="Rhea" id="RHEA-COMP:10123"/>
        <dbReference type="Rhea" id="RHEA-COMP:10124"/>
        <dbReference type="ChEBI" id="CHEBI:15377"/>
        <dbReference type="ChEBI" id="CHEBI:15378"/>
        <dbReference type="ChEBI" id="CHEBI:59871"/>
        <dbReference type="ChEBI" id="CHEBI:78442"/>
        <dbReference type="ChEBI" id="CHEBI:79333"/>
        <dbReference type="EC" id="3.1.1.96"/>
    </reaction>
</comment>
<comment type="subunit">
    <text evidence="1">Homodimer.</text>
</comment>
<comment type="subcellular location">
    <subcellularLocation>
        <location evidence="1">Cytoplasm</location>
    </subcellularLocation>
</comment>
<comment type="domain">
    <text evidence="1">A Gly-cisPro motif from one monomer fits into the active site of the other monomer to allow specific chiral rejection of L-amino acids.</text>
</comment>
<comment type="similarity">
    <text evidence="1">Belongs to the DTD family.</text>
</comment>
<reference key="1">
    <citation type="journal article" date="2008" name="DNA Res.">
        <title>Determination of the genome sequence of Porphyromonas gingivalis strain ATCC 33277 and genomic comparison with strain W83 revealed extensive genome rearrangements in P. gingivalis.</title>
        <authorList>
            <person name="Naito M."/>
            <person name="Hirakawa H."/>
            <person name="Yamashita A."/>
            <person name="Ohara N."/>
            <person name="Shoji M."/>
            <person name="Yukitake H."/>
            <person name="Nakayama K."/>
            <person name="Toh H."/>
            <person name="Yoshimura F."/>
            <person name="Kuhara S."/>
            <person name="Hattori M."/>
            <person name="Hayashi T."/>
            <person name="Nakayama K."/>
        </authorList>
    </citation>
    <scope>NUCLEOTIDE SEQUENCE [LARGE SCALE GENOMIC DNA]</scope>
    <source>
        <strain>ATCC 33277 / DSM 20709 / CIP 103683 / JCM 12257 / NCTC 11834 / 2561</strain>
    </source>
</reference>
<name>DTD_PORG3</name>
<proteinExistence type="inferred from homology"/>